<keyword id="KW-0131">Cell cycle</keyword>
<keyword id="KW-0132">Cell division</keyword>
<keyword id="KW-0963">Cytoplasm</keyword>
<keyword id="KW-1185">Reference proteome</keyword>
<keyword id="KW-0717">Septation</keyword>
<protein>
    <recommendedName>
        <fullName evidence="1">Cell division protein SepF</fullName>
    </recommendedName>
</protein>
<evidence type="ECO:0000255" key="1">
    <source>
        <dbReference type="HAMAP-Rule" id="MF_01197"/>
    </source>
</evidence>
<comment type="function">
    <text evidence="1">Cell division protein that is part of the divisome complex and is recruited early to the Z-ring. Probably stimulates Z-ring formation, perhaps through the cross-linking of FtsZ protofilaments. Its function overlaps with FtsA.</text>
</comment>
<comment type="subunit">
    <text evidence="1">Homodimer. Interacts with FtsZ.</text>
</comment>
<comment type="subcellular location">
    <subcellularLocation>
        <location evidence="1">Cytoplasm</location>
    </subcellularLocation>
    <text evidence="1">Localizes to the division site, in a FtsZ-dependent manner.</text>
</comment>
<comment type="similarity">
    <text evidence="1">Belongs to the SepF family.</text>
</comment>
<name>SEPF_OCEIH</name>
<sequence>MSFKNKLKDYFMGDEYEYEYVDEDNQSEEPTQKEAKVNPKNVVNLSSVQQSNSRVVLIEPRNYNEAQEIADNIVNRRAVIINLQRVDHQQAKRIVDFLSGTVYAVKGDIQKLGAETFLCTPDNVEVSGTITEMLYEQEEYDKGW</sequence>
<reference key="1">
    <citation type="journal article" date="2002" name="Nucleic Acids Res.">
        <title>Genome sequence of Oceanobacillus iheyensis isolated from the Iheya Ridge and its unexpected adaptive capabilities to extreme environments.</title>
        <authorList>
            <person name="Takami H."/>
            <person name="Takaki Y."/>
            <person name="Uchiyama I."/>
        </authorList>
    </citation>
    <scope>NUCLEOTIDE SEQUENCE [LARGE SCALE GENOMIC DNA]</scope>
    <source>
        <strain>DSM 14371 / CIP 107618 / JCM 11309 / KCTC 3954 / HTE831</strain>
    </source>
</reference>
<accession>Q8ER44</accession>
<proteinExistence type="inferred from homology"/>
<organism>
    <name type="scientific">Oceanobacillus iheyensis (strain DSM 14371 / CIP 107618 / JCM 11309 / KCTC 3954 / HTE831)</name>
    <dbReference type="NCBI Taxonomy" id="221109"/>
    <lineage>
        <taxon>Bacteria</taxon>
        <taxon>Bacillati</taxon>
        <taxon>Bacillota</taxon>
        <taxon>Bacilli</taxon>
        <taxon>Bacillales</taxon>
        <taxon>Bacillaceae</taxon>
        <taxon>Oceanobacillus</taxon>
    </lineage>
</organism>
<dbReference type="EMBL" id="BA000028">
    <property type="protein sequence ID" value="BAC13436.1"/>
    <property type="molecule type" value="Genomic_DNA"/>
</dbReference>
<dbReference type="RefSeq" id="WP_011065881.1">
    <property type="nucleotide sequence ID" value="NC_004193.1"/>
</dbReference>
<dbReference type="SMR" id="Q8ER44"/>
<dbReference type="STRING" id="221109.gene:10733720"/>
<dbReference type="KEGG" id="oih:OB1480"/>
<dbReference type="eggNOG" id="COG1799">
    <property type="taxonomic scope" value="Bacteria"/>
</dbReference>
<dbReference type="HOGENOM" id="CLU_078499_4_1_9"/>
<dbReference type="OrthoDB" id="9815206at2"/>
<dbReference type="PhylomeDB" id="Q8ER44"/>
<dbReference type="Proteomes" id="UP000000822">
    <property type="component" value="Chromosome"/>
</dbReference>
<dbReference type="GO" id="GO:0005737">
    <property type="term" value="C:cytoplasm"/>
    <property type="evidence" value="ECO:0007669"/>
    <property type="project" value="UniProtKB-SubCell"/>
</dbReference>
<dbReference type="GO" id="GO:0000917">
    <property type="term" value="P:division septum assembly"/>
    <property type="evidence" value="ECO:0007669"/>
    <property type="project" value="UniProtKB-KW"/>
</dbReference>
<dbReference type="GO" id="GO:0043093">
    <property type="term" value="P:FtsZ-dependent cytokinesis"/>
    <property type="evidence" value="ECO:0007669"/>
    <property type="project" value="UniProtKB-UniRule"/>
</dbReference>
<dbReference type="Gene3D" id="3.30.110.150">
    <property type="entry name" value="SepF-like protein"/>
    <property type="match status" value="1"/>
</dbReference>
<dbReference type="HAMAP" id="MF_01197">
    <property type="entry name" value="SepF"/>
    <property type="match status" value="1"/>
</dbReference>
<dbReference type="InterPro" id="IPR023052">
    <property type="entry name" value="Cell_div_SepF"/>
</dbReference>
<dbReference type="InterPro" id="IPR007561">
    <property type="entry name" value="Cell_div_SepF/SepF-rel"/>
</dbReference>
<dbReference type="InterPro" id="IPR038594">
    <property type="entry name" value="SepF-like_sf"/>
</dbReference>
<dbReference type="PANTHER" id="PTHR35798">
    <property type="entry name" value="CELL DIVISION PROTEIN SEPF"/>
    <property type="match status" value="1"/>
</dbReference>
<dbReference type="PANTHER" id="PTHR35798:SF1">
    <property type="entry name" value="CELL DIVISION PROTEIN SEPF"/>
    <property type="match status" value="1"/>
</dbReference>
<dbReference type="Pfam" id="PF04472">
    <property type="entry name" value="SepF"/>
    <property type="match status" value="1"/>
</dbReference>
<feature type="chain" id="PRO_0000334053" description="Cell division protein SepF">
    <location>
        <begin position="1"/>
        <end position="144"/>
    </location>
</feature>
<gene>
    <name evidence="1" type="primary">sepF</name>
    <name type="ordered locus">OB1480</name>
</gene>